<evidence type="ECO:0000255" key="1">
    <source>
        <dbReference type="HAMAP-Rule" id="MF_04147"/>
    </source>
</evidence>
<evidence type="ECO:0000269" key="2">
    <source>
    </source>
</evidence>
<evidence type="ECO:0000269" key="3">
    <source>
    </source>
</evidence>
<evidence type="ECO:0000269" key="4">
    <source>
    </source>
</evidence>
<evidence type="ECO:0000269" key="5">
    <source>
    </source>
</evidence>
<evidence type="ECO:0000269" key="6">
    <source>
    </source>
</evidence>
<evidence type="ECO:0000269" key="7">
    <source>
    </source>
</evidence>
<evidence type="ECO:0000269" key="8">
    <source>
    </source>
</evidence>
<evidence type="ECO:0000305" key="9">
    <source>
    </source>
</evidence>
<proteinExistence type="evidence at protein level"/>
<keyword id="KW-0067">ATP-binding</keyword>
<keyword id="KW-0255">Endonuclease</keyword>
<keyword id="KW-0378">Hydrolase</keyword>
<keyword id="KW-0460">Magnesium</keyword>
<keyword id="KW-0479">Metal-binding</keyword>
<keyword id="KW-0540">Nuclease</keyword>
<keyword id="KW-0547">Nucleotide-binding</keyword>
<keyword id="KW-0231">Viral genome packaging</keyword>
<keyword id="KW-1188">Viral release from host cell</keyword>
<dbReference type="EC" id="3.6.4.-" evidence="1 4 8"/>
<dbReference type="EC" id="3.1.21.-" evidence="1 8"/>
<dbReference type="EMBL" id="M14784">
    <property type="protein sequence ID" value="AAA92528.1"/>
    <property type="molecule type" value="Genomic_DNA"/>
</dbReference>
<dbReference type="PIR" id="F23476">
    <property type="entry name" value="JVBPB3"/>
</dbReference>
<dbReference type="SMR" id="P10310"/>
<dbReference type="GO" id="GO:0098009">
    <property type="term" value="C:viral terminase, large subunit"/>
    <property type="evidence" value="ECO:0007669"/>
    <property type="project" value="UniProtKB-UniRule"/>
</dbReference>
<dbReference type="GO" id="GO:0005524">
    <property type="term" value="F:ATP binding"/>
    <property type="evidence" value="ECO:0007669"/>
    <property type="project" value="UniProtKB-KW"/>
</dbReference>
<dbReference type="GO" id="GO:0016887">
    <property type="term" value="F:ATP hydrolysis activity"/>
    <property type="evidence" value="ECO:0007669"/>
    <property type="project" value="InterPro"/>
</dbReference>
<dbReference type="GO" id="GO:0004519">
    <property type="term" value="F:endonuclease activity"/>
    <property type="evidence" value="ECO:0007669"/>
    <property type="project" value="UniProtKB-UniRule"/>
</dbReference>
<dbReference type="GO" id="GO:0046872">
    <property type="term" value="F:metal ion binding"/>
    <property type="evidence" value="ECO:0007669"/>
    <property type="project" value="UniProtKB-UniRule"/>
</dbReference>
<dbReference type="GO" id="GO:0051276">
    <property type="term" value="P:chromosome organization"/>
    <property type="evidence" value="ECO:0007669"/>
    <property type="project" value="UniProtKB-UniRule"/>
</dbReference>
<dbReference type="GO" id="GO:0019073">
    <property type="term" value="P:viral DNA genome packaging"/>
    <property type="evidence" value="ECO:0007669"/>
    <property type="project" value="UniProtKB-UniRule"/>
</dbReference>
<dbReference type="Gene3D" id="3.40.50.300">
    <property type="entry name" value="P-loop containing nucleotide triphosphate hydrolases"/>
    <property type="match status" value="1"/>
</dbReference>
<dbReference type="HAMAP" id="MF_04147">
    <property type="entry name" value="TERL_T7"/>
    <property type="match status" value="1"/>
</dbReference>
<dbReference type="InterPro" id="IPR047987">
    <property type="entry name" value="Gp19-like_virus"/>
</dbReference>
<dbReference type="InterPro" id="IPR054762">
    <property type="entry name" value="Gp19_RNaseH-like"/>
</dbReference>
<dbReference type="InterPro" id="IPR027417">
    <property type="entry name" value="P-loop_NTPase"/>
</dbReference>
<dbReference type="InterPro" id="IPR044271">
    <property type="entry name" value="Terminase_large_su_gp19"/>
</dbReference>
<dbReference type="NCBIfam" id="NF033889">
    <property type="entry name" value="termin_lrg_T7"/>
    <property type="match status" value="1"/>
</dbReference>
<dbReference type="Pfam" id="PF22530">
    <property type="entry name" value="Terminase-T7_RNaseH-like"/>
    <property type="match status" value="1"/>
</dbReference>
<organismHost>
    <name type="scientific">Escherichia coli</name>
    <dbReference type="NCBI Taxonomy" id="562"/>
</organismHost>
<accession>P10310</accession>
<sequence>MSTQSNRNALVVAQLKGDFVAFLFVLWKALNLPVPTKCQIDMAKVLANGDNKKFILQAFRGIGKSFITCAFVVWTLWRDPQLKILIVSASKERADLNSIFIKNIIDLLPFLDELKPSPGQRDSVISFDVGPAKPDHSPSVKSVGITGQLTGSRADIIIADDVEIPSNSATQGAREKLWTLVQEFRALLKPLPTSRVIYLGTPQTEMTLYKELEDNRGYTTIIWPALYPRSREEDLYYGERLAPMLREEFNDGFEMLQGQPTDPVRFDMEDLRERELEYGKAGFTLQFMLNPNLSDAEKYPLRLRDAIVCGLDFEKAPMHYQWLPNRQNRNEELPNVGLKGDDIHSYHSCSQNTGQYQQRILVIDPSGRGKDETGYAVLFTLNGYIYLMEAGGFPDGYSDKTLESLAKKANEWKVQTVVFESNFGDGMFGKVFSPVLLKHHAAALEEIRARGMKELRICDTLEPVLSTHRLVIRDEVIREDYQTARDADGKHDVRYSLFYQLTRMAREKGAVAHDDRLDAFRLGVEFLRSTMELDAVKVEAEVLEAFLEEHMEHPIHSAGHVVTAMVDGMELYWEDDDVNGDRFINW</sequence>
<comment type="function">
    <text evidence="1 5 6 9">The terminase large subunit acts as an ATP driven molecular motor necessary for viral DNA translocation into empty capsids and as an endonuclease that cuts the viral genome at a unique and precise dsDNA sequence to initiate and to end a packaging reaction (PubMed:3617498, PubMed:3754362). The terminase lies at a unique vertex of the procapsid and is composed of two subunits, a small terminase subunit involved in viral DNA recognition (packaging sequence), and a large terminase subunit possessing endonucleolytic and ATPase activities (PubMed:8289246). Both terminase subunits heterooligomerize and are docked on the portal protein to form the packaging machine (By similarity). The terminase large subunit exhibits endonuclease activity and cleaves the viral genome concatemer. Once the DNA is packaged, the terminase detaches from the connector and gets replaced by the tail to finish maturation of the virion (By similarity).</text>
</comment>
<comment type="cofactor">
    <cofactor evidence="1 5 6 9">
        <name>Mg(2+)</name>
        <dbReference type="ChEBI" id="CHEBI:18420"/>
    </cofactor>
</comment>
<comment type="subunit">
    <text evidence="1">Homopentamer. Interacts with the terminase small subunit; the active complex is probably heterooligomeric. Interacts with the portal protein.</text>
</comment>
<comment type="domain">
    <text evidence="7">The ATPase region is in the N-terminus, whereas the nuclease region is in the central part. The C-terminus is involved in prohead binding (PubMed:7844832).</text>
</comment>
<comment type="domain">
    <text evidence="1">The ATPase region is in the N-terminus, whereas the nuclease region is in the central part. The C-terminus is involved in prohead binding.</text>
</comment>
<comment type="similarity">
    <text evidence="1">Belongs to the Teseptimavirus large terminase family.</text>
</comment>
<organism>
    <name type="scientific">Enterobacteria phage T3</name>
    <name type="common">Bacteriophage T3</name>
    <dbReference type="NCBI Taxonomy" id="10759"/>
    <lineage>
        <taxon>Viruses</taxon>
        <taxon>Duplodnaviria</taxon>
        <taxon>Heunggongvirae</taxon>
        <taxon>Uroviricota</taxon>
        <taxon>Caudoviricetes</taxon>
        <taxon>Autographiviridae</taxon>
        <taxon>Studiervirinae</taxon>
        <taxon>Teetrevirus</taxon>
        <taxon>Teetrevirus T3</taxon>
    </lineage>
</organism>
<feature type="chain" id="PRO_0000106540" description="Terminase, large subunit">
    <location>
        <begin position="1"/>
        <end position="586"/>
    </location>
</feature>
<feature type="region of interest" description="ATPase activity" evidence="1 8">
    <location>
        <begin position="1"/>
        <end position="229"/>
    </location>
</feature>
<feature type="region of interest" description="Nuclease activity" evidence="1">
    <location>
        <begin position="344"/>
        <end position="429"/>
    </location>
</feature>
<feature type="region of interest" description="Involved in prohead binding" evidence="1 7">
    <location>
        <begin position="571"/>
        <end position="586"/>
    </location>
</feature>
<feature type="short sequence motif" description="Walker A motif" evidence="1 2">
    <location>
        <begin position="58"/>
        <end position="65"/>
    </location>
</feature>
<feature type="short sequence motif" description="Walker B motif" evidence="1 2">
    <location>
        <begin position="156"/>
        <end position="161"/>
    </location>
</feature>
<feature type="binding site" evidence="1">
    <location>
        <position position="364"/>
    </location>
    <ligand>
        <name>Mg(2+)</name>
        <dbReference type="ChEBI" id="CHEBI:18420"/>
        <label>1</label>
        <note>catalytic; for nuclease activity</note>
    </ligand>
</feature>
<feature type="binding site" evidence="1">
    <location>
        <position position="364"/>
    </location>
    <ligand>
        <name>Mg(2+)</name>
        <dbReference type="ChEBI" id="CHEBI:18420"/>
        <label>2</label>
        <note>catalytic; for nuclease activity</note>
    </ligand>
</feature>
<feature type="binding site" evidence="1">
    <location>
        <position position="420"/>
    </location>
    <ligand>
        <name>Mg(2+)</name>
        <dbReference type="ChEBI" id="CHEBI:18420"/>
        <label>2</label>
        <note>catalytic; for nuclease activity</note>
    </ligand>
</feature>
<feature type="binding site" evidence="1">
    <location>
        <position position="518"/>
    </location>
    <ligand>
        <name>Mg(2+)</name>
        <dbReference type="ChEBI" id="CHEBI:18420"/>
        <label>1</label>
        <note>catalytic; for nuclease activity</note>
    </ligand>
</feature>
<feature type="mutagenesis site" description="Defective in DNA packaging." evidence="3">
    <original>G</original>
    <variation>D</variation>
    <location>
        <position position="61"/>
    </location>
</feature>
<feature type="mutagenesis site" description="Defective in DNA packaging. No effect on DNA cleavage." evidence="8">
    <original>H</original>
    <variation>D</variation>
    <location>
        <position position="344"/>
    </location>
</feature>
<feature type="mutagenesis site" description="Possibly defective in packaging initiation." evidence="8">
    <original>H</original>
    <variation>R</variation>
    <location>
        <position position="347"/>
    </location>
</feature>
<feature type="mutagenesis site" description="Defective in DNA cleavage." evidence="8">
    <original>G</original>
    <variation>D</variation>
    <location>
        <position position="369"/>
    </location>
</feature>
<feature type="mutagenesis site" description="Defective in DNA cleavage." evidence="3 8">
    <original>G</original>
    <variation>E</variation>
    <location>
        <position position="424"/>
    </location>
</feature>
<feature type="mutagenesis site" description="No effect on DNA packaging." evidence="3">
    <original>K</original>
    <variation>T</variation>
    <location>
        <position position="430"/>
    </location>
</feature>
<feature type="mutagenesis site" description="No effect on DNA packaging." evidence="3">
    <original>H</original>
    <variation>L</variation>
    <location>
        <position position="553"/>
    </location>
</feature>
<reference key="1">
    <citation type="journal article" date="1986" name="Virology">
        <title>Cloning and sequencing of the genetic right end of bacteriophage T3 DNA.</title>
        <authorList>
            <person name="Yamada M."/>
            <person name="Fujisawa H."/>
            <person name="Kato H."/>
            <person name="Hamada K."/>
            <person name="Minagawa T."/>
        </authorList>
    </citation>
    <scope>NUCLEOTIDE SEQUENCE [GENOMIC DNA]</scope>
</reference>
<reference key="2">
    <citation type="journal article" date="1986" name="Virology">
        <authorList>
            <person name="Yamada M."/>
            <person name="Fujisawa H."/>
            <person name="Kato H."/>
            <person name="Hamada K."/>
            <person name="Minagawa T."/>
        </authorList>
    </citation>
    <scope>ERRATUM OF PUBMED:3010556</scope>
</reference>
<reference key="3">
    <citation type="journal article" date="1986" name="Virology">
        <title>A defined in vitro system for packaging of bacteriophage T3 DNA.</title>
        <authorList>
            <person name="Hamada K."/>
            <person name="Fujisawa H."/>
            <person name="Minagawa T."/>
        </authorList>
    </citation>
    <scope>FUNCTION</scope>
    <scope>COFACTOR</scope>
</reference>
<reference key="4">
    <citation type="journal article" date="1987" name="Virology">
        <title>Early events in DNA packaging in a defined in vitro system of bacteriophage T3.</title>
        <authorList>
            <person name="Shibata H."/>
            <person name="Fujisawa H."/>
            <person name="Minagawa T."/>
        </authorList>
    </citation>
    <scope>FUNCTION</scope>
    <scope>COFACTOR</scope>
</reference>
<reference key="5">
    <citation type="journal article" date="1987" name="Virology">
        <title>Characterization of ATPase activity of a defined in vitro system for packaging of bacteriophage T3 DNA.</title>
        <authorList>
            <person name="Hamada K."/>
            <person name="Fujisawa H."/>
            <person name="Minagawa T."/>
        </authorList>
    </citation>
    <scope>CATALYTIC ACTIVITY</scope>
</reference>
<reference key="6">
    <citation type="journal article" date="1991" name="Virology">
        <title>Dissection of functional domains of the packaging protein of bacteriophage T3 by site-directed mutagenesis.</title>
        <authorList>
            <person name="Kimura M."/>
            <person name="Fujisawa H."/>
        </authorList>
    </citation>
    <scope>MUTAGENESIS OF GLY-61; GLY-424; LYS-430 AND HIS-553</scope>
</reference>
<reference key="7">
    <citation type="journal article" date="1994" name="J. Mol. Biol.">
        <title>Analysis of functional domains of the packaging proteins of bacteriophage T3 by site-directed mutagenesis.</title>
        <authorList>
            <person name="Morita M."/>
            <person name="Tasaka M."/>
            <person name="Fujisawa H."/>
        </authorList>
    </citation>
    <scope>FUNCTION</scope>
    <scope>MUTAGENESIS OF HIS-344; HIS-347; GLY-369 AND GLY-424</scope>
    <scope>CATALYTIC ACTIVITY</scope>
    <scope>COFACTOR</scope>
</reference>
<reference key="8">
    <citation type="journal article" date="1995" name="J. Mol. Biol.">
        <title>Structural and functional domains of the large subunit of the bacteriophage T3 DNA packaging enzyme: importance of the C-terminal region in prohead binding.</title>
        <authorList>
            <person name="Morita M."/>
            <person name="Tasaka M."/>
            <person name="Fujisawa H."/>
        </authorList>
    </citation>
    <scope>DOMAIN</scope>
</reference>
<reference key="9">
    <citation type="journal article" date="1995" name="Virology">
        <title>Analysis of the fine structure of the prohead binding domain of the packaging protein of bacteriophage T3 using a hexapeptide, an analog of a prohead binding site.</title>
        <authorList>
            <person name="Morita M."/>
            <person name="Tasaka M."/>
            <person name="Fujisawa H."/>
        </authorList>
    </citation>
    <scope>DOMAIN</scope>
</reference>
<reference key="10">
    <citation type="journal article" date="2004" name="Virology">
        <title>Novel and deviant Walker A ATP-binding motifs in bacteriophage large terminase-DNA packaging proteins.</title>
        <authorList>
            <person name="Mitchell M.S."/>
            <person name="Rao V.B."/>
        </authorList>
    </citation>
    <scope>MOTIF</scope>
</reference>
<gene>
    <name type="primary">19</name>
</gene>
<protein>
    <recommendedName>
        <fullName evidence="1">Terminase, large subunit</fullName>
    </recommendedName>
    <alternativeName>
        <fullName evidence="1">DNA-packaging protein</fullName>
    </alternativeName>
    <alternativeName>
        <fullName>Gene product 19</fullName>
        <shortName>gp19</shortName>
    </alternativeName>
    <domain>
        <recommendedName>
            <fullName evidence="1">ATPase</fullName>
            <ecNumber evidence="1 4 8">3.6.4.-</ecNumber>
        </recommendedName>
    </domain>
    <domain>
        <recommendedName>
            <fullName evidence="1">Endonuclease</fullName>
            <ecNumber evidence="1 8">3.1.21.-</ecNumber>
        </recommendedName>
    </domain>
</protein>
<name>TERL_BPT3</name>